<accession>B7M0J5</accession>
<feature type="chain" id="PRO_1000186310" description="Pyridoxine/pyridoxamine 5'-phosphate oxidase">
    <location>
        <begin position="1"/>
        <end position="218"/>
    </location>
</feature>
<feature type="binding site" evidence="1">
    <location>
        <begin position="14"/>
        <end position="17"/>
    </location>
    <ligand>
        <name>substrate</name>
    </ligand>
</feature>
<feature type="binding site" evidence="1">
    <location>
        <begin position="67"/>
        <end position="72"/>
    </location>
    <ligand>
        <name>FMN</name>
        <dbReference type="ChEBI" id="CHEBI:58210"/>
    </ligand>
</feature>
<feature type="binding site" evidence="1">
    <location>
        <position position="72"/>
    </location>
    <ligand>
        <name>substrate</name>
    </ligand>
</feature>
<feature type="binding site" evidence="1">
    <location>
        <begin position="82"/>
        <end position="83"/>
    </location>
    <ligand>
        <name>FMN</name>
        <dbReference type="ChEBI" id="CHEBI:58210"/>
    </ligand>
</feature>
<feature type="binding site" evidence="1">
    <location>
        <position position="88"/>
    </location>
    <ligand>
        <name>FMN</name>
        <dbReference type="ChEBI" id="CHEBI:58210"/>
    </ligand>
</feature>
<feature type="binding site" evidence="1">
    <location>
        <position position="89"/>
    </location>
    <ligand>
        <name>FMN</name>
        <dbReference type="ChEBI" id="CHEBI:58210"/>
    </ligand>
</feature>
<feature type="binding site" evidence="1">
    <location>
        <position position="111"/>
    </location>
    <ligand>
        <name>FMN</name>
        <dbReference type="ChEBI" id="CHEBI:58210"/>
    </ligand>
</feature>
<feature type="binding site" evidence="1">
    <location>
        <position position="129"/>
    </location>
    <ligand>
        <name>substrate</name>
    </ligand>
</feature>
<feature type="binding site" evidence="1">
    <location>
        <position position="133"/>
    </location>
    <ligand>
        <name>substrate</name>
    </ligand>
</feature>
<feature type="binding site" evidence="1">
    <location>
        <position position="137"/>
    </location>
    <ligand>
        <name>substrate</name>
    </ligand>
</feature>
<feature type="binding site" evidence="1">
    <location>
        <begin position="146"/>
        <end position="147"/>
    </location>
    <ligand>
        <name>FMN</name>
        <dbReference type="ChEBI" id="CHEBI:58210"/>
    </ligand>
</feature>
<feature type="binding site" evidence="1">
    <location>
        <position position="191"/>
    </location>
    <ligand>
        <name>FMN</name>
        <dbReference type="ChEBI" id="CHEBI:58210"/>
    </ligand>
</feature>
<feature type="binding site" evidence="1">
    <location>
        <begin position="197"/>
        <end position="199"/>
    </location>
    <ligand>
        <name>substrate</name>
    </ligand>
</feature>
<feature type="binding site" evidence="1">
    <location>
        <position position="201"/>
    </location>
    <ligand>
        <name>FMN</name>
        <dbReference type="ChEBI" id="CHEBI:58210"/>
    </ligand>
</feature>
<evidence type="ECO:0000255" key="1">
    <source>
        <dbReference type="HAMAP-Rule" id="MF_01629"/>
    </source>
</evidence>
<keyword id="KW-0285">Flavoprotein</keyword>
<keyword id="KW-0288">FMN</keyword>
<keyword id="KW-0560">Oxidoreductase</keyword>
<keyword id="KW-0664">Pyridoxine biosynthesis</keyword>
<sequence>MSDNDELQQIAHLRREYTKGGLRRRDLPADPLTLFERWLSQACEAKLADPTAMVVATVDEHAQPYQRIVLLKHYDEKGMVFYTNLGSRKAHQIENNPRVSLLFPWHTLERQVMVIGKAERLSTLEVMKYFHSRPRDSQIGAWVSKQSSRISARGILESKFLELKQKFQQGEVPLPSFWGGFRVSLEQIEFWQGGEHRLHDRFLYQRENDAWKIDRLAP</sequence>
<name>PDXH_ECO8A</name>
<reference key="1">
    <citation type="journal article" date="2009" name="PLoS Genet.">
        <title>Organised genome dynamics in the Escherichia coli species results in highly diverse adaptive paths.</title>
        <authorList>
            <person name="Touchon M."/>
            <person name="Hoede C."/>
            <person name="Tenaillon O."/>
            <person name="Barbe V."/>
            <person name="Baeriswyl S."/>
            <person name="Bidet P."/>
            <person name="Bingen E."/>
            <person name="Bonacorsi S."/>
            <person name="Bouchier C."/>
            <person name="Bouvet O."/>
            <person name="Calteau A."/>
            <person name="Chiapello H."/>
            <person name="Clermont O."/>
            <person name="Cruveiller S."/>
            <person name="Danchin A."/>
            <person name="Diard M."/>
            <person name="Dossat C."/>
            <person name="Karoui M.E."/>
            <person name="Frapy E."/>
            <person name="Garry L."/>
            <person name="Ghigo J.M."/>
            <person name="Gilles A.M."/>
            <person name="Johnson J."/>
            <person name="Le Bouguenec C."/>
            <person name="Lescat M."/>
            <person name="Mangenot S."/>
            <person name="Martinez-Jehanne V."/>
            <person name="Matic I."/>
            <person name="Nassif X."/>
            <person name="Oztas S."/>
            <person name="Petit M.A."/>
            <person name="Pichon C."/>
            <person name="Rouy Z."/>
            <person name="Ruf C.S."/>
            <person name="Schneider D."/>
            <person name="Tourret J."/>
            <person name="Vacherie B."/>
            <person name="Vallenet D."/>
            <person name="Medigue C."/>
            <person name="Rocha E.P.C."/>
            <person name="Denamur E."/>
        </authorList>
    </citation>
    <scope>NUCLEOTIDE SEQUENCE [LARGE SCALE GENOMIC DNA]</scope>
    <source>
        <strain>IAI1</strain>
    </source>
</reference>
<organism>
    <name type="scientific">Escherichia coli O8 (strain IAI1)</name>
    <dbReference type="NCBI Taxonomy" id="585034"/>
    <lineage>
        <taxon>Bacteria</taxon>
        <taxon>Pseudomonadati</taxon>
        <taxon>Pseudomonadota</taxon>
        <taxon>Gammaproteobacteria</taxon>
        <taxon>Enterobacterales</taxon>
        <taxon>Enterobacteriaceae</taxon>
        <taxon>Escherichia</taxon>
    </lineage>
</organism>
<comment type="function">
    <text evidence="1">Catalyzes the oxidation of either pyridoxine 5'-phosphate (PNP) or pyridoxamine 5'-phosphate (PMP) into pyridoxal 5'-phosphate (PLP).</text>
</comment>
<comment type="catalytic activity">
    <reaction evidence="1">
        <text>pyridoxamine 5'-phosphate + O2 + H2O = pyridoxal 5'-phosphate + H2O2 + NH4(+)</text>
        <dbReference type="Rhea" id="RHEA:15817"/>
        <dbReference type="ChEBI" id="CHEBI:15377"/>
        <dbReference type="ChEBI" id="CHEBI:15379"/>
        <dbReference type="ChEBI" id="CHEBI:16240"/>
        <dbReference type="ChEBI" id="CHEBI:28938"/>
        <dbReference type="ChEBI" id="CHEBI:58451"/>
        <dbReference type="ChEBI" id="CHEBI:597326"/>
        <dbReference type="EC" id="1.4.3.5"/>
    </reaction>
</comment>
<comment type="catalytic activity">
    <reaction evidence="1">
        <text>pyridoxine 5'-phosphate + O2 = pyridoxal 5'-phosphate + H2O2</text>
        <dbReference type="Rhea" id="RHEA:15149"/>
        <dbReference type="ChEBI" id="CHEBI:15379"/>
        <dbReference type="ChEBI" id="CHEBI:16240"/>
        <dbReference type="ChEBI" id="CHEBI:58589"/>
        <dbReference type="ChEBI" id="CHEBI:597326"/>
        <dbReference type="EC" id="1.4.3.5"/>
    </reaction>
</comment>
<comment type="cofactor">
    <cofactor evidence="1">
        <name>FMN</name>
        <dbReference type="ChEBI" id="CHEBI:58210"/>
    </cofactor>
    <text evidence="1">Binds 1 FMN per subunit.</text>
</comment>
<comment type="pathway">
    <text evidence="1">Cofactor metabolism; pyridoxal 5'-phosphate salvage; pyridoxal 5'-phosphate from pyridoxamine 5'-phosphate: step 1/1.</text>
</comment>
<comment type="pathway">
    <text evidence="1">Cofactor metabolism; pyridoxal 5'-phosphate salvage; pyridoxal 5'-phosphate from pyridoxine 5'-phosphate: step 1/1.</text>
</comment>
<comment type="subunit">
    <text evidence="1">Homodimer.</text>
</comment>
<comment type="similarity">
    <text evidence="1">Belongs to the pyridoxamine 5'-phosphate oxidase family.</text>
</comment>
<protein>
    <recommendedName>
        <fullName evidence="1">Pyridoxine/pyridoxamine 5'-phosphate oxidase</fullName>
        <ecNumber evidence="1">1.4.3.5</ecNumber>
    </recommendedName>
    <alternativeName>
        <fullName evidence="1">PNP/PMP oxidase</fullName>
        <shortName evidence="1">PNPOx</shortName>
    </alternativeName>
    <alternativeName>
        <fullName evidence="1">Pyridoxal 5'-phosphate synthase</fullName>
    </alternativeName>
</protein>
<proteinExistence type="inferred from homology"/>
<gene>
    <name evidence="1" type="primary">pdxH</name>
    <name type="ordered locus">ECIAI1_1690</name>
</gene>
<dbReference type="EC" id="1.4.3.5" evidence="1"/>
<dbReference type="EMBL" id="CU928160">
    <property type="protein sequence ID" value="CAQ98547.1"/>
    <property type="molecule type" value="Genomic_DNA"/>
</dbReference>
<dbReference type="RefSeq" id="WP_001282313.1">
    <property type="nucleotide sequence ID" value="NC_011741.1"/>
</dbReference>
<dbReference type="SMR" id="B7M0J5"/>
<dbReference type="GeneID" id="93775792"/>
<dbReference type="KEGG" id="ecr:ECIAI1_1690"/>
<dbReference type="HOGENOM" id="CLU_032263_2_2_6"/>
<dbReference type="UniPathway" id="UPA01068">
    <property type="reaction ID" value="UER00304"/>
</dbReference>
<dbReference type="UniPathway" id="UPA01068">
    <property type="reaction ID" value="UER00305"/>
</dbReference>
<dbReference type="GO" id="GO:0010181">
    <property type="term" value="F:FMN binding"/>
    <property type="evidence" value="ECO:0007669"/>
    <property type="project" value="UniProtKB-UniRule"/>
</dbReference>
<dbReference type="GO" id="GO:0004733">
    <property type="term" value="F:pyridoxamine phosphate oxidase activity"/>
    <property type="evidence" value="ECO:0007669"/>
    <property type="project" value="UniProtKB-UniRule"/>
</dbReference>
<dbReference type="GO" id="GO:0008615">
    <property type="term" value="P:pyridoxine biosynthetic process"/>
    <property type="evidence" value="ECO:0007669"/>
    <property type="project" value="UniProtKB-KW"/>
</dbReference>
<dbReference type="FunFam" id="2.30.110.10:FF:000001">
    <property type="entry name" value="Pyridoxine/pyridoxamine 5'-phosphate oxidase"/>
    <property type="match status" value="1"/>
</dbReference>
<dbReference type="Gene3D" id="2.30.110.10">
    <property type="entry name" value="Electron Transport, Fmn-binding Protein, Chain A"/>
    <property type="match status" value="1"/>
</dbReference>
<dbReference type="HAMAP" id="MF_01629">
    <property type="entry name" value="PdxH"/>
    <property type="match status" value="1"/>
</dbReference>
<dbReference type="InterPro" id="IPR000659">
    <property type="entry name" value="Pyridox_Oxase"/>
</dbReference>
<dbReference type="InterPro" id="IPR019740">
    <property type="entry name" value="Pyridox_Oxase_CS"/>
</dbReference>
<dbReference type="InterPro" id="IPR011576">
    <property type="entry name" value="Pyridox_Oxase_N"/>
</dbReference>
<dbReference type="InterPro" id="IPR019576">
    <property type="entry name" value="Pyridoxamine_oxidase_dimer_C"/>
</dbReference>
<dbReference type="InterPro" id="IPR012349">
    <property type="entry name" value="Split_barrel_FMN-bd"/>
</dbReference>
<dbReference type="NCBIfam" id="TIGR00558">
    <property type="entry name" value="pdxH"/>
    <property type="match status" value="1"/>
</dbReference>
<dbReference type="NCBIfam" id="NF004231">
    <property type="entry name" value="PRK05679.1"/>
    <property type="match status" value="1"/>
</dbReference>
<dbReference type="PANTHER" id="PTHR10851:SF0">
    <property type="entry name" value="PYRIDOXINE-5'-PHOSPHATE OXIDASE"/>
    <property type="match status" value="1"/>
</dbReference>
<dbReference type="PANTHER" id="PTHR10851">
    <property type="entry name" value="PYRIDOXINE-5-PHOSPHATE OXIDASE"/>
    <property type="match status" value="1"/>
</dbReference>
<dbReference type="Pfam" id="PF10590">
    <property type="entry name" value="PNP_phzG_C"/>
    <property type="match status" value="1"/>
</dbReference>
<dbReference type="Pfam" id="PF01243">
    <property type="entry name" value="PNPOx_N"/>
    <property type="match status" value="1"/>
</dbReference>
<dbReference type="PIRSF" id="PIRSF000190">
    <property type="entry name" value="Pyd_amn-ph_oxd"/>
    <property type="match status" value="1"/>
</dbReference>
<dbReference type="SUPFAM" id="SSF50475">
    <property type="entry name" value="FMN-binding split barrel"/>
    <property type="match status" value="1"/>
</dbReference>
<dbReference type="PROSITE" id="PS01064">
    <property type="entry name" value="PYRIDOX_OXIDASE"/>
    <property type="match status" value="1"/>
</dbReference>